<organism>
    <name type="scientific">Kluyveromyces lactis (strain ATCC 8585 / CBS 2359 / DSM 70799 / NBRC 1267 / NRRL Y-1140 / WM37)</name>
    <name type="common">Yeast</name>
    <name type="synonym">Candida sphaerica</name>
    <dbReference type="NCBI Taxonomy" id="284590"/>
    <lineage>
        <taxon>Eukaryota</taxon>
        <taxon>Fungi</taxon>
        <taxon>Dikarya</taxon>
        <taxon>Ascomycota</taxon>
        <taxon>Saccharomycotina</taxon>
        <taxon>Saccharomycetes</taxon>
        <taxon>Saccharomycetales</taxon>
        <taxon>Saccharomycetaceae</taxon>
        <taxon>Kluyveromyces</taxon>
    </lineage>
</organism>
<sequence>MEELRERVWHGSLNVEIMLSDSIVVPNTPLSEKCYHIVVLRESFLALYLPAIVRKLGNNVIVTYENPYKQWWFEYDGVPVPWEYPCGVLFDFLCNSSTTSTGKEDDQRLQMWKLKLCHGNKYPPGILPLVDGLRQVKDHWKHQWKQACFILNGSAKRIMSLSIPDFEAFWQSLISRHQPDYIKVREKLLTPNKTKHIPIRVWTADASFLQPSIPANSDTMTLFDVMTSMDIKLQENNRAIIQGIVICSDEDIINLYDLFASIDGFLYVVIK</sequence>
<name>ATG5_KLULA</name>
<feature type="chain" id="PRO_0000219005" description="Autophagy protein 5">
    <location>
        <begin position="1"/>
        <end position="271"/>
    </location>
</feature>
<feature type="cross-link" description="Glycyl lysine isopeptide (Lys-Gly) (interchain with G-Cter in ATG12)" evidence="1">
    <location>
        <position position="145"/>
    </location>
</feature>
<gene>
    <name type="primary">ATG5</name>
    <name type="ordered locus">KLLA0F11363g</name>
</gene>
<evidence type="ECO:0000250" key="1"/>
<evidence type="ECO:0000305" key="2"/>
<protein>
    <recommendedName>
        <fullName>Autophagy protein 5</fullName>
    </recommendedName>
</protein>
<reference key="1">
    <citation type="journal article" date="2004" name="Nature">
        <title>Genome evolution in yeasts.</title>
        <authorList>
            <person name="Dujon B."/>
            <person name="Sherman D."/>
            <person name="Fischer G."/>
            <person name="Durrens P."/>
            <person name="Casaregola S."/>
            <person name="Lafontaine I."/>
            <person name="de Montigny J."/>
            <person name="Marck C."/>
            <person name="Neuveglise C."/>
            <person name="Talla E."/>
            <person name="Goffard N."/>
            <person name="Frangeul L."/>
            <person name="Aigle M."/>
            <person name="Anthouard V."/>
            <person name="Babour A."/>
            <person name="Barbe V."/>
            <person name="Barnay S."/>
            <person name="Blanchin S."/>
            <person name="Beckerich J.-M."/>
            <person name="Beyne E."/>
            <person name="Bleykasten C."/>
            <person name="Boisrame A."/>
            <person name="Boyer J."/>
            <person name="Cattolico L."/>
            <person name="Confanioleri F."/>
            <person name="de Daruvar A."/>
            <person name="Despons L."/>
            <person name="Fabre E."/>
            <person name="Fairhead C."/>
            <person name="Ferry-Dumazet H."/>
            <person name="Groppi A."/>
            <person name="Hantraye F."/>
            <person name="Hennequin C."/>
            <person name="Jauniaux N."/>
            <person name="Joyet P."/>
            <person name="Kachouri R."/>
            <person name="Kerrest A."/>
            <person name="Koszul R."/>
            <person name="Lemaire M."/>
            <person name="Lesur I."/>
            <person name="Ma L."/>
            <person name="Muller H."/>
            <person name="Nicaud J.-M."/>
            <person name="Nikolski M."/>
            <person name="Oztas S."/>
            <person name="Ozier-Kalogeropoulos O."/>
            <person name="Pellenz S."/>
            <person name="Potier S."/>
            <person name="Richard G.-F."/>
            <person name="Straub M.-L."/>
            <person name="Suleau A."/>
            <person name="Swennen D."/>
            <person name="Tekaia F."/>
            <person name="Wesolowski-Louvel M."/>
            <person name="Westhof E."/>
            <person name="Wirth B."/>
            <person name="Zeniou-Meyer M."/>
            <person name="Zivanovic Y."/>
            <person name="Bolotin-Fukuhara M."/>
            <person name="Thierry A."/>
            <person name="Bouchier C."/>
            <person name="Caudron B."/>
            <person name="Scarpelli C."/>
            <person name="Gaillardin C."/>
            <person name="Weissenbach J."/>
            <person name="Wincker P."/>
            <person name="Souciet J.-L."/>
        </authorList>
    </citation>
    <scope>NUCLEOTIDE SEQUENCE [LARGE SCALE GENOMIC DNA]</scope>
    <source>
        <strain>ATCC 8585 / CBS 2359 / DSM 70799 / NBRC 1267 / NRRL Y-1140 / WM37</strain>
    </source>
</reference>
<accession>Q6CKE2</accession>
<comment type="function">
    <text evidence="1">Involved in cytoplasm to vacuole transport (Cvt) and autophagic vesicle formation. Autophagy is essential for maintenance of amino acid levels and protein synthesis under nitrogen starvation. Required for selective autophagic degradation of the nucleus (nucleophagy). Also required for mitophagy, which eliminates defective or superfluous mitochondria in order to fulfill cellular energy requirements and prevent excess ROS production. Conjugation with ATG12, through a ubiquitin-like conjugating system involving ATG7 as an E1-like activating enzyme and ATG10 as an E2-like conjugating enzyme, is essential for its function. The ATG12-ATG5 conjugate acts as an E3-like enzyme which is required for lipidation of ATG8 and ATG8 association to the vesicle membranes (By similarity).</text>
</comment>
<comment type="subunit">
    <text evidence="1">Conjugated with ATG12.</text>
</comment>
<comment type="subcellular location">
    <subcellularLocation>
        <location evidence="1">Preautophagosomal structure membrane</location>
        <topology evidence="1">Peripheral membrane protein</topology>
    </subcellularLocation>
</comment>
<comment type="PTM">
    <text evidence="1">Conjugated to ATG12; which is essential for autophagy.</text>
</comment>
<comment type="similarity">
    <text evidence="2">Belongs to the ATG5 family.</text>
</comment>
<proteinExistence type="inferred from homology"/>
<dbReference type="EMBL" id="CR382126">
    <property type="protein sequence ID" value="CAG98305.1"/>
    <property type="molecule type" value="Genomic_DNA"/>
</dbReference>
<dbReference type="RefSeq" id="XP_455597.1">
    <property type="nucleotide sequence ID" value="XM_455597.1"/>
</dbReference>
<dbReference type="SMR" id="Q6CKE2"/>
<dbReference type="FunCoup" id="Q6CKE2">
    <property type="interactions" value="367"/>
</dbReference>
<dbReference type="STRING" id="284590.Q6CKE2"/>
<dbReference type="PaxDb" id="284590-Q6CKE2"/>
<dbReference type="KEGG" id="kla:KLLA0_F11363g"/>
<dbReference type="eggNOG" id="KOG2976">
    <property type="taxonomic scope" value="Eukaryota"/>
</dbReference>
<dbReference type="HOGENOM" id="CLU_051894_2_0_1"/>
<dbReference type="InParanoid" id="Q6CKE2"/>
<dbReference type="OMA" id="SIQKAVW"/>
<dbReference type="Proteomes" id="UP000000598">
    <property type="component" value="Chromosome F"/>
</dbReference>
<dbReference type="GO" id="GO:0034274">
    <property type="term" value="C:Atg12-Atg5-Atg16 complex"/>
    <property type="evidence" value="ECO:0007669"/>
    <property type="project" value="TreeGrafter"/>
</dbReference>
<dbReference type="GO" id="GO:0005776">
    <property type="term" value="C:autophagosome"/>
    <property type="evidence" value="ECO:0007669"/>
    <property type="project" value="TreeGrafter"/>
</dbReference>
<dbReference type="GO" id="GO:0044233">
    <property type="term" value="C:mitochondria-associated endoplasmic reticulum membrane contact site"/>
    <property type="evidence" value="ECO:0007669"/>
    <property type="project" value="TreeGrafter"/>
</dbReference>
<dbReference type="GO" id="GO:0061908">
    <property type="term" value="C:phagophore"/>
    <property type="evidence" value="ECO:0007669"/>
    <property type="project" value="TreeGrafter"/>
</dbReference>
<dbReference type="GO" id="GO:0034045">
    <property type="term" value="C:phagophore assembly site membrane"/>
    <property type="evidence" value="ECO:0007669"/>
    <property type="project" value="UniProtKB-SubCell"/>
</dbReference>
<dbReference type="GO" id="GO:0019776">
    <property type="term" value="F:Atg8-family ligase activity"/>
    <property type="evidence" value="ECO:0007669"/>
    <property type="project" value="TreeGrafter"/>
</dbReference>
<dbReference type="GO" id="GO:0000422">
    <property type="term" value="P:autophagy of mitochondrion"/>
    <property type="evidence" value="ECO:0007669"/>
    <property type="project" value="TreeGrafter"/>
</dbReference>
<dbReference type="GO" id="GO:0006995">
    <property type="term" value="P:cellular response to nitrogen starvation"/>
    <property type="evidence" value="ECO:0007669"/>
    <property type="project" value="TreeGrafter"/>
</dbReference>
<dbReference type="GO" id="GO:0034727">
    <property type="term" value="P:piecemeal microautophagy of the nucleus"/>
    <property type="evidence" value="ECO:0007669"/>
    <property type="project" value="TreeGrafter"/>
</dbReference>
<dbReference type="GO" id="GO:0015031">
    <property type="term" value="P:protein transport"/>
    <property type="evidence" value="ECO:0007669"/>
    <property type="project" value="UniProtKB-KW"/>
</dbReference>
<dbReference type="Gene3D" id="3.10.20.620">
    <property type="match status" value="1"/>
</dbReference>
<dbReference type="Gene3D" id="1.10.246.190">
    <property type="entry name" value="Autophagy protein Apg5, helix rich domain"/>
    <property type="match status" value="1"/>
</dbReference>
<dbReference type="Gene3D" id="3.10.20.90">
    <property type="entry name" value="Phosphatidylinositol 3-kinase Catalytic Subunit, Chain A, domain 1"/>
    <property type="match status" value="1"/>
</dbReference>
<dbReference type="InterPro" id="IPR007239">
    <property type="entry name" value="Atg5"/>
</dbReference>
<dbReference type="InterPro" id="IPR048940">
    <property type="entry name" value="ATG5_HBR"/>
</dbReference>
<dbReference type="InterPro" id="IPR042526">
    <property type="entry name" value="Atg5_HR"/>
</dbReference>
<dbReference type="InterPro" id="IPR048939">
    <property type="entry name" value="ATG5_UblA"/>
</dbReference>
<dbReference type="InterPro" id="IPR042527">
    <property type="entry name" value="Atg5_UblA_dom_sf"/>
</dbReference>
<dbReference type="InterPro" id="IPR048318">
    <property type="entry name" value="ATG5_UblB"/>
</dbReference>
<dbReference type="PANTHER" id="PTHR13040">
    <property type="entry name" value="AUTOPHAGY PROTEIN 5"/>
    <property type="match status" value="1"/>
</dbReference>
<dbReference type="PANTHER" id="PTHR13040:SF2">
    <property type="entry name" value="AUTOPHAGY PROTEIN 5"/>
    <property type="match status" value="1"/>
</dbReference>
<dbReference type="Pfam" id="PF20637">
    <property type="entry name" value="ATG5_HBR"/>
    <property type="match status" value="1"/>
</dbReference>
<dbReference type="Pfam" id="PF20638">
    <property type="entry name" value="ATG5_UblA"/>
    <property type="match status" value="1"/>
</dbReference>
<dbReference type="Pfam" id="PF04106">
    <property type="entry name" value="ATG5_UblB"/>
    <property type="match status" value="1"/>
</dbReference>
<keyword id="KW-0072">Autophagy</keyword>
<keyword id="KW-1017">Isopeptide bond</keyword>
<keyword id="KW-0472">Membrane</keyword>
<keyword id="KW-0653">Protein transport</keyword>
<keyword id="KW-1185">Reference proteome</keyword>
<keyword id="KW-0813">Transport</keyword>
<keyword id="KW-0832">Ubl conjugation</keyword>